<proteinExistence type="inferred from homology"/>
<protein>
    <recommendedName>
        <fullName evidence="1">Large ribosomal subunit protein uL29</fullName>
    </recommendedName>
    <alternativeName>
        <fullName evidence="2">50S ribosomal protein L29</fullName>
    </alternativeName>
</protein>
<accession>B0K5Q1</accession>
<reference key="1">
    <citation type="submission" date="2008-01" db="EMBL/GenBank/DDBJ databases">
        <title>Complete sequence of Thermoanaerobacter sp. X514.</title>
        <authorList>
            <consortium name="US DOE Joint Genome Institute"/>
            <person name="Copeland A."/>
            <person name="Lucas S."/>
            <person name="Lapidus A."/>
            <person name="Barry K."/>
            <person name="Glavina del Rio T."/>
            <person name="Dalin E."/>
            <person name="Tice H."/>
            <person name="Pitluck S."/>
            <person name="Bruce D."/>
            <person name="Goodwin L."/>
            <person name="Saunders E."/>
            <person name="Brettin T."/>
            <person name="Detter J.C."/>
            <person name="Han C."/>
            <person name="Schmutz J."/>
            <person name="Larimer F."/>
            <person name="Land M."/>
            <person name="Hauser L."/>
            <person name="Kyrpides N."/>
            <person name="Kim E."/>
            <person name="Hemme C."/>
            <person name="Fields M.W."/>
            <person name="He Z."/>
            <person name="Zhou J."/>
            <person name="Richardson P."/>
        </authorList>
    </citation>
    <scope>NUCLEOTIDE SEQUENCE [LARGE SCALE GENOMIC DNA]</scope>
    <source>
        <strain>X514</strain>
    </source>
</reference>
<comment type="similarity">
    <text evidence="1">Belongs to the universal ribosomal protein uL29 family.</text>
</comment>
<keyword id="KW-0687">Ribonucleoprotein</keyword>
<keyword id="KW-0689">Ribosomal protein</keyword>
<evidence type="ECO:0000255" key="1">
    <source>
        <dbReference type="HAMAP-Rule" id="MF_00374"/>
    </source>
</evidence>
<evidence type="ECO:0000305" key="2"/>
<dbReference type="EMBL" id="CP000923">
    <property type="protein sequence ID" value="ABY92177.1"/>
    <property type="molecule type" value="Genomic_DNA"/>
</dbReference>
<dbReference type="RefSeq" id="WP_003868568.1">
    <property type="nucleotide sequence ID" value="NC_010320.1"/>
</dbReference>
<dbReference type="SMR" id="B0K5Q1"/>
<dbReference type="KEGG" id="tex:Teth514_0875"/>
<dbReference type="HOGENOM" id="CLU_158491_5_2_9"/>
<dbReference type="Proteomes" id="UP000002155">
    <property type="component" value="Chromosome"/>
</dbReference>
<dbReference type="GO" id="GO:0022625">
    <property type="term" value="C:cytosolic large ribosomal subunit"/>
    <property type="evidence" value="ECO:0007669"/>
    <property type="project" value="TreeGrafter"/>
</dbReference>
<dbReference type="GO" id="GO:0003735">
    <property type="term" value="F:structural constituent of ribosome"/>
    <property type="evidence" value="ECO:0007669"/>
    <property type="project" value="InterPro"/>
</dbReference>
<dbReference type="GO" id="GO:0006412">
    <property type="term" value="P:translation"/>
    <property type="evidence" value="ECO:0007669"/>
    <property type="project" value="UniProtKB-UniRule"/>
</dbReference>
<dbReference type="CDD" id="cd00427">
    <property type="entry name" value="Ribosomal_L29_HIP"/>
    <property type="match status" value="1"/>
</dbReference>
<dbReference type="FunFam" id="1.10.287.310:FF:000001">
    <property type="entry name" value="50S ribosomal protein L29"/>
    <property type="match status" value="1"/>
</dbReference>
<dbReference type="Gene3D" id="1.10.287.310">
    <property type="match status" value="1"/>
</dbReference>
<dbReference type="HAMAP" id="MF_00374">
    <property type="entry name" value="Ribosomal_uL29"/>
    <property type="match status" value="1"/>
</dbReference>
<dbReference type="InterPro" id="IPR050063">
    <property type="entry name" value="Ribosomal_protein_uL29"/>
</dbReference>
<dbReference type="InterPro" id="IPR001854">
    <property type="entry name" value="Ribosomal_uL29"/>
</dbReference>
<dbReference type="InterPro" id="IPR018254">
    <property type="entry name" value="Ribosomal_uL29_CS"/>
</dbReference>
<dbReference type="InterPro" id="IPR036049">
    <property type="entry name" value="Ribosomal_uL29_sf"/>
</dbReference>
<dbReference type="NCBIfam" id="TIGR00012">
    <property type="entry name" value="L29"/>
    <property type="match status" value="1"/>
</dbReference>
<dbReference type="PANTHER" id="PTHR10916">
    <property type="entry name" value="60S RIBOSOMAL PROTEIN L35/50S RIBOSOMAL PROTEIN L29"/>
    <property type="match status" value="1"/>
</dbReference>
<dbReference type="PANTHER" id="PTHR10916:SF0">
    <property type="entry name" value="LARGE RIBOSOMAL SUBUNIT PROTEIN UL29C"/>
    <property type="match status" value="1"/>
</dbReference>
<dbReference type="Pfam" id="PF00831">
    <property type="entry name" value="Ribosomal_L29"/>
    <property type="match status" value="1"/>
</dbReference>
<dbReference type="SUPFAM" id="SSF46561">
    <property type="entry name" value="Ribosomal protein L29 (L29p)"/>
    <property type="match status" value="1"/>
</dbReference>
<dbReference type="PROSITE" id="PS00579">
    <property type="entry name" value="RIBOSOMAL_L29"/>
    <property type="match status" value="1"/>
</dbReference>
<gene>
    <name evidence="1" type="primary">rpmC</name>
    <name type="ordered locus">Teth514_0875</name>
</gene>
<name>RL29_THEPX</name>
<feature type="chain" id="PRO_1000121832" description="Large ribosomal subunit protein uL29">
    <location>
        <begin position="1"/>
        <end position="69"/>
    </location>
</feature>
<sequence length="69" mass="8205">MKAREIRELTNEELLQKLSDLKAELFNLRFQLATGQLDNPMRIRDVRKTIARIKTILRERELGIRQNKA</sequence>
<organism>
    <name type="scientific">Thermoanaerobacter sp. (strain X514)</name>
    <dbReference type="NCBI Taxonomy" id="399726"/>
    <lineage>
        <taxon>Bacteria</taxon>
        <taxon>Bacillati</taxon>
        <taxon>Bacillota</taxon>
        <taxon>Clostridia</taxon>
        <taxon>Thermoanaerobacterales</taxon>
        <taxon>Thermoanaerobacteraceae</taxon>
        <taxon>Thermoanaerobacter</taxon>
    </lineage>
</organism>